<evidence type="ECO:0000250" key="1"/>
<evidence type="ECO:0000305" key="2"/>
<name>UXAB_ECO57</name>
<protein>
    <recommendedName>
        <fullName>Altronate oxidoreductase</fullName>
        <ecNumber>1.1.1.58</ecNumber>
    </recommendedName>
    <alternativeName>
        <fullName>Tagaturonate dehydrogenase</fullName>
    </alternativeName>
    <alternativeName>
        <fullName>Tagaturonate reductase</fullName>
    </alternativeName>
</protein>
<feature type="chain" id="PRO_0000170743" description="Altronate oxidoreductase">
    <location>
        <begin position="1"/>
        <end position="483"/>
    </location>
</feature>
<feature type="binding site" evidence="1">
    <location>
        <begin position="18"/>
        <end position="29"/>
    </location>
    <ligand>
        <name>NAD(+)</name>
        <dbReference type="ChEBI" id="CHEBI:57540"/>
    </ligand>
</feature>
<reference key="1">
    <citation type="journal article" date="2001" name="Nature">
        <title>Genome sequence of enterohaemorrhagic Escherichia coli O157:H7.</title>
        <authorList>
            <person name="Perna N.T."/>
            <person name="Plunkett G. III"/>
            <person name="Burland V."/>
            <person name="Mau B."/>
            <person name="Glasner J.D."/>
            <person name="Rose D.J."/>
            <person name="Mayhew G.F."/>
            <person name="Evans P.S."/>
            <person name="Gregor J."/>
            <person name="Kirkpatrick H.A."/>
            <person name="Posfai G."/>
            <person name="Hackett J."/>
            <person name="Klink S."/>
            <person name="Boutin A."/>
            <person name="Shao Y."/>
            <person name="Miller L."/>
            <person name="Grotbeck E.J."/>
            <person name="Davis N.W."/>
            <person name="Lim A."/>
            <person name="Dimalanta E.T."/>
            <person name="Potamousis K."/>
            <person name="Apodaca J."/>
            <person name="Anantharaman T.S."/>
            <person name="Lin J."/>
            <person name="Yen G."/>
            <person name="Schwartz D.C."/>
            <person name="Welch R.A."/>
            <person name="Blattner F.R."/>
        </authorList>
    </citation>
    <scope>NUCLEOTIDE SEQUENCE [LARGE SCALE GENOMIC DNA]</scope>
    <source>
        <strain>O157:H7 / EDL933 / ATCC 700927 / EHEC</strain>
    </source>
</reference>
<reference key="2">
    <citation type="journal article" date="2001" name="DNA Res.">
        <title>Complete genome sequence of enterohemorrhagic Escherichia coli O157:H7 and genomic comparison with a laboratory strain K-12.</title>
        <authorList>
            <person name="Hayashi T."/>
            <person name="Makino K."/>
            <person name="Ohnishi M."/>
            <person name="Kurokawa K."/>
            <person name="Ishii K."/>
            <person name="Yokoyama K."/>
            <person name="Han C.-G."/>
            <person name="Ohtsubo E."/>
            <person name="Nakayama K."/>
            <person name="Murata T."/>
            <person name="Tanaka M."/>
            <person name="Tobe T."/>
            <person name="Iida T."/>
            <person name="Takami H."/>
            <person name="Honda T."/>
            <person name="Sasakawa C."/>
            <person name="Ogasawara N."/>
            <person name="Yasunaga T."/>
            <person name="Kuhara S."/>
            <person name="Shiba T."/>
            <person name="Hattori M."/>
            <person name="Shinagawa H."/>
        </authorList>
    </citation>
    <scope>NUCLEOTIDE SEQUENCE [LARGE SCALE GENOMIC DNA]</scope>
    <source>
        <strain>O157:H7 / Sakai / RIMD 0509952 / EHEC</strain>
    </source>
</reference>
<dbReference type="EC" id="1.1.1.58"/>
<dbReference type="EMBL" id="AE005174">
    <property type="protein sequence ID" value="AAG56245.2"/>
    <property type="molecule type" value="Genomic_DNA"/>
</dbReference>
<dbReference type="EMBL" id="BA000007">
    <property type="protein sequence ID" value="BAB35551.1"/>
    <property type="molecule type" value="Genomic_DNA"/>
</dbReference>
<dbReference type="PIR" id="H90894">
    <property type="entry name" value="H90894"/>
</dbReference>
<dbReference type="RefSeq" id="NP_310155.1">
    <property type="nucleotide sequence ID" value="NC_002695.1"/>
</dbReference>
<dbReference type="RefSeq" id="WP_000854633.1">
    <property type="nucleotide sequence ID" value="NZ_VOAI01000024.1"/>
</dbReference>
<dbReference type="SMR" id="P0A6L8"/>
<dbReference type="STRING" id="155864.Z2184"/>
<dbReference type="GeneID" id="917329"/>
<dbReference type="KEGG" id="ece:Z2184"/>
<dbReference type="KEGG" id="ecs:ECs_2128"/>
<dbReference type="PATRIC" id="fig|386585.9.peg.2234"/>
<dbReference type="eggNOG" id="COG0246">
    <property type="taxonomic scope" value="Bacteria"/>
</dbReference>
<dbReference type="HOGENOM" id="CLU_027324_1_0_6"/>
<dbReference type="OMA" id="HNTFCST"/>
<dbReference type="UniPathway" id="UPA00246"/>
<dbReference type="Proteomes" id="UP000000558">
    <property type="component" value="Chromosome"/>
</dbReference>
<dbReference type="Proteomes" id="UP000002519">
    <property type="component" value="Chromosome"/>
</dbReference>
<dbReference type="GO" id="GO:0005829">
    <property type="term" value="C:cytosol"/>
    <property type="evidence" value="ECO:0007669"/>
    <property type="project" value="TreeGrafter"/>
</dbReference>
<dbReference type="GO" id="GO:0008926">
    <property type="term" value="F:mannitol-1-phosphate 5-dehydrogenase activity"/>
    <property type="evidence" value="ECO:0007669"/>
    <property type="project" value="TreeGrafter"/>
</dbReference>
<dbReference type="GO" id="GO:0009026">
    <property type="term" value="F:tagaturonate reductase activity"/>
    <property type="evidence" value="ECO:0007669"/>
    <property type="project" value="UniProtKB-UniRule"/>
</dbReference>
<dbReference type="GO" id="GO:0019698">
    <property type="term" value="P:D-galacturonate catabolic process"/>
    <property type="evidence" value="ECO:0007669"/>
    <property type="project" value="TreeGrafter"/>
</dbReference>
<dbReference type="GO" id="GO:0019592">
    <property type="term" value="P:mannitol catabolic process"/>
    <property type="evidence" value="ECO:0007669"/>
    <property type="project" value="TreeGrafter"/>
</dbReference>
<dbReference type="FunFam" id="1.10.1040.10:FF:000018">
    <property type="entry name" value="Altronate oxidoreductase"/>
    <property type="match status" value="1"/>
</dbReference>
<dbReference type="FunFam" id="3.40.50.720:FF:000153">
    <property type="entry name" value="Altronate oxidoreductase"/>
    <property type="match status" value="1"/>
</dbReference>
<dbReference type="Gene3D" id="1.10.1040.10">
    <property type="entry name" value="N-(1-d-carboxylethyl)-l-norvaline Dehydrogenase, domain 2"/>
    <property type="match status" value="1"/>
</dbReference>
<dbReference type="Gene3D" id="3.40.50.720">
    <property type="entry name" value="NAD(P)-binding Rossmann-like Domain"/>
    <property type="match status" value="1"/>
</dbReference>
<dbReference type="HAMAP" id="MF_00670">
    <property type="entry name" value="Altron_oxidoreduct"/>
    <property type="match status" value="1"/>
</dbReference>
<dbReference type="InterPro" id="IPR008927">
    <property type="entry name" value="6-PGluconate_DH-like_C_sf"/>
</dbReference>
<dbReference type="InterPro" id="IPR013328">
    <property type="entry name" value="6PGD_dom2"/>
</dbReference>
<dbReference type="InterPro" id="IPR023668">
    <property type="entry name" value="Altronate_OxRdtase"/>
</dbReference>
<dbReference type="InterPro" id="IPR013118">
    <property type="entry name" value="Mannitol_DH_C"/>
</dbReference>
<dbReference type="InterPro" id="IPR013131">
    <property type="entry name" value="Mannitol_DH_N"/>
</dbReference>
<dbReference type="InterPro" id="IPR036291">
    <property type="entry name" value="NAD(P)-bd_dom_sf"/>
</dbReference>
<dbReference type="NCBIfam" id="NF002969">
    <property type="entry name" value="PRK03643.1"/>
    <property type="match status" value="1"/>
</dbReference>
<dbReference type="PANTHER" id="PTHR30524:SF0">
    <property type="entry name" value="ALTRONATE OXIDOREDUCTASE-RELATED"/>
    <property type="match status" value="1"/>
</dbReference>
<dbReference type="PANTHER" id="PTHR30524">
    <property type="entry name" value="MANNITOL-1-PHOSPHATE 5-DEHYDROGENASE"/>
    <property type="match status" value="1"/>
</dbReference>
<dbReference type="Pfam" id="PF01232">
    <property type="entry name" value="Mannitol_dh"/>
    <property type="match status" value="1"/>
</dbReference>
<dbReference type="Pfam" id="PF08125">
    <property type="entry name" value="Mannitol_dh_C"/>
    <property type="match status" value="1"/>
</dbReference>
<dbReference type="SUPFAM" id="SSF48179">
    <property type="entry name" value="6-phosphogluconate dehydrogenase C-terminal domain-like"/>
    <property type="match status" value="1"/>
</dbReference>
<dbReference type="SUPFAM" id="SSF51735">
    <property type="entry name" value="NAD(P)-binding Rossmann-fold domains"/>
    <property type="match status" value="1"/>
</dbReference>
<accession>P0A6L8</accession>
<accession>P24214</accession>
<accession>P78064</accession>
<comment type="catalytic activity">
    <reaction>
        <text>D-altronate + NAD(+) = keto-D-tagaturonate + NADH + H(+)</text>
        <dbReference type="Rhea" id="RHEA:17813"/>
        <dbReference type="ChEBI" id="CHEBI:15378"/>
        <dbReference type="ChEBI" id="CHEBI:17360"/>
        <dbReference type="ChEBI" id="CHEBI:17886"/>
        <dbReference type="ChEBI" id="CHEBI:57540"/>
        <dbReference type="ChEBI" id="CHEBI:57945"/>
        <dbReference type="EC" id="1.1.1.58"/>
    </reaction>
</comment>
<comment type="pathway">
    <text>Carbohydrate metabolism; pentose and glucuronate interconversion.</text>
</comment>
<comment type="similarity">
    <text evidence="2">Belongs to the mannitol dehydrogenase family. UxaB subfamily.</text>
</comment>
<gene>
    <name type="primary">uxaB</name>
    <name type="ordered locus">Z2184</name>
    <name type="ordered locus">ECs2128</name>
</gene>
<sequence>MKTLNRRDFPGAQYPERIIQFGEGNFLRAFVDWQIDLLNEHTDLNSGVVVVRPIETSFPPSLSTQDGLYTTIIRGLNEKGEAVSDARLIRSVNREISVYSEYDEFLKLAHNPEMRFVFSNTTEAGISYHAGDKFDDAPAVSYPAKLTRLLFERFSHFNGALDKGWIIIPCELIDYNGDALRELVLRYAQEWALPEAFIQWLDQANSFCSTLVDRIVTGYPRDEVAKLEEELGYHDGFLDTAEHFYLFVIQGPKSLATELRLDKYPLNVLIVDDIKPYKERKVAILNGAHTALVPVAFQAGLDTVGEAMNDAEICAFVEKAIYEEIIPVLDLPRDELESFASAVTGRFRNPYIKHQLLSIALNGMTKFRTRILPQLLAGQKANGTLPARLTFALAALIAFYRGERNGETYPVQDDAHWLERYQQLWSQHRDRVIGTQELVAIVLAEKDHWEQDLTQVPGLVEQVANDLDAILEKGMREAVRPLC</sequence>
<proteinExistence type="inferred from homology"/>
<organism>
    <name type="scientific">Escherichia coli O157:H7</name>
    <dbReference type="NCBI Taxonomy" id="83334"/>
    <lineage>
        <taxon>Bacteria</taxon>
        <taxon>Pseudomonadati</taxon>
        <taxon>Pseudomonadota</taxon>
        <taxon>Gammaproteobacteria</taxon>
        <taxon>Enterobacterales</taxon>
        <taxon>Enterobacteriaceae</taxon>
        <taxon>Escherichia</taxon>
    </lineage>
</organism>
<keyword id="KW-0520">NAD</keyword>
<keyword id="KW-0560">Oxidoreductase</keyword>
<keyword id="KW-1185">Reference proteome</keyword>